<comment type="function">
    <text evidence="1">Catalyzes a reversible aldol reaction between acetaldehyde and D-glyceraldehyde 3-phosphate to generate 2-deoxy-D-ribose 5-phosphate.</text>
</comment>
<comment type="catalytic activity">
    <reaction evidence="1">
        <text>2-deoxy-D-ribose 5-phosphate = D-glyceraldehyde 3-phosphate + acetaldehyde</text>
        <dbReference type="Rhea" id="RHEA:12821"/>
        <dbReference type="ChEBI" id="CHEBI:15343"/>
        <dbReference type="ChEBI" id="CHEBI:59776"/>
        <dbReference type="ChEBI" id="CHEBI:62877"/>
        <dbReference type="EC" id="4.1.2.4"/>
    </reaction>
</comment>
<comment type="pathway">
    <text evidence="1">Carbohydrate degradation; 2-deoxy-D-ribose 1-phosphate degradation; D-glyceraldehyde 3-phosphate and acetaldehyde from 2-deoxy-alpha-D-ribose 1-phosphate: step 2/2.</text>
</comment>
<comment type="subcellular location">
    <subcellularLocation>
        <location evidence="1">Cytoplasm</location>
    </subcellularLocation>
</comment>
<comment type="similarity">
    <text evidence="1 2">Belongs to the DeoC/FbaB aldolase family. DeoC type 1 subfamily.</text>
</comment>
<sequence>MTSNQLAQYIDHTALTAEKNEQDISTLCNEAIEHGFYSVCINSAYIPLAKEKLAGSNVKICTVVGFPLGANLTSVKAFETQESIKAGANEIDMVINVGWIKSQKWDEVKQDIQAVFNACNGTPLKVILETCLLTKDEIVKACEICKEIGVAFVKTSTGFNKGGATVEDVALMKNTVGNIGVKASGGVRDTETALAMIKAGATRIGASAGIAIISGTQDTQSTY</sequence>
<proteinExistence type="inferred from homology"/>
<gene>
    <name evidence="1" type="primary">deoC</name>
    <name type="ordered locus">HI_1116</name>
</gene>
<feature type="chain" id="PRO_0000057234" description="Deoxyribose-phosphate aldolase">
    <location>
        <begin position="1"/>
        <end position="223"/>
    </location>
</feature>
<feature type="active site" description="Proton donor/acceptor" evidence="1">
    <location>
        <position position="92"/>
    </location>
</feature>
<feature type="active site" description="Schiff-base intermediate with acetaldehyde" evidence="1">
    <location>
        <position position="154"/>
    </location>
</feature>
<feature type="active site" description="Proton donor/acceptor" evidence="1">
    <location>
        <position position="182"/>
    </location>
</feature>
<reference key="1">
    <citation type="journal article" date="1995" name="Science">
        <title>Whole-genome random sequencing and assembly of Haemophilus influenzae Rd.</title>
        <authorList>
            <person name="Fleischmann R.D."/>
            <person name="Adams M.D."/>
            <person name="White O."/>
            <person name="Clayton R.A."/>
            <person name="Kirkness E.F."/>
            <person name="Kerlavage A.R."/>
            <person name="Bult C.J."/>
            <person name="Tomb J.-F."/>
            <person name="Dougherty B.A."/>
            <person name="Merrick J.M."/>
            <person name="McKenney K."/>
            <person name="Sutton G.G."/>
            <person name="FitzHugh W."/>
            <person name="Fields C.A."/>
            <person name="Gocayne J.D."/>
            <person name="Scott J.D."/>
            <person name="Shirley R."/>
            <person name="Liu L.-I."/>
            <person name="Glodek A."/>
            <person name="Kelley J.M."/>
            <person name="Weidman J.F."/>
            <person name="Phillips C.A."/>
            <person name="Spriggs T."/>
            <person name="Hedblom E."/>
            <person name="Cotton M.D."/>
            <person name="Utterback T.R."/>
            <person name="Hanna M.C."/>
            <person name="Nguyen D.T."/>
            <person name="Saudek D.M."/>
            <person name="Brandon R.C."/>
            <person name="Fine L.D."/>
            <person name="Fritchman J.L."/>
            <person name="Fuhrmann J.L."/>
            <person name="Geoghagen N.S.M."/>
            <person name="Gnehm C.L."/>
            <person name="McDonald L.A."/>
            <person name="Small K.V."/>
            <person name="Fraser C.M."/>
            <person name="Smith H.O."/>
            <person name="Venter J.C."/>
        </authorList>
    </citation>
    <scope>NUCLEOTIDE SEQUENCE [LARGE SCALE GENOMIC DNA]</scope>
    <source>
        <strain>ATCC 51907 / DSM 11121 / KW20 / Rd</strain>
    </source>
</reference>
<name>DEOC_HAEIN</name>
<dbReference type="EC" id="4.1.2.4" evidence="1"/>
<dbReference type="EMBL" id="L42023">
    <property type="protein sequence ID" value="AAC22770.1"/>
    <property type="molecule type" value="Genomic_DNA"/>
</dbReference>
<dbReference type="PIR" id="H64183">
    <property type="entry name" value="H64183"/>
</dbReference>
<dbReference type="RefSeq" id="NP_439273.1">
    <property type="nucleotide sequence ID" value="NC_000907.1"/>
</dbReference>
<dbReference type="SMR" id="P44430"/>
<dbReference type="STRING" id="71421.HI_1116"/>
<dbReference type="EnsemblBacteria" id="AAC22770">
    <property type="protein sequence ID" value="AAC22770"/>
    <property type="gene ID" value="HI_1116"/>
</dbReference>
<dbReference type="KEGG" id="hin:HI_1116"/>
<dbReference type="PATRIC" id="fig|71421.8.peg.1165"/>
<dbReference type="eggNOG" id="COG0274">
    <property type="taxonomic scope" value="Bacteria"/>
</dbReference>
<dbReference type="HOGENOM" id="CLU_053595_0_1_6"/>
<dbReference type="OrthoDB" id="6579831at2"/>
<dbReference type="PhylomeDB" id="P44430"/>
<dbReference type="BioCyc" id="HINF71421:G1GJ1-1151-MONOMER"/>
<dbReference type="BRENDA" id="4.1.2.4">
    <property type="organism ID" value="2529"/>
</dbReference>
<dbReference type="UniPathway" id="UPA00002">
    <property type="reaction ID" value="UER00468"/>
</dbReference>
<dbReference type="Proteomes" id="UP000000579">
    <property type="component" value="Chromosome"/>
</dbReference>
<dbReference type="GO" id="GO:0005737">
    <property type="term" value="C:cytoplasm"/>
    <property type="evidence" value="ECO:0007669"/>
    <property type="project" value="UniProtKB-SubCell"/>
</dbReference>
<dbReference type="GO" id="GO:0004139">
    <property type="term" value="F:deoxyribose-phosphate aldolase activity"/>
    <property type="evidence" value="ECO:0000318"/>
    <property type="project" value="GO_Central"/>
</dbReference>
<dbReference type="GO" id="GO:0006018">
    <property type="term" value="P:2-deoxyribose 1-phosphate catabolic process"/>
    <property type="evidence" value="ECO:0007669"/>
    <property type="project" value="UniProtKB-UniRule"/>
</dbReference>
<dbReference type="GO" id="GO:0016052">
    <property type="term" value="P:carbohydrate catabolic process"/>
    <property type="evidence" value="ECO:0000318"/>
    <property type="project" value="GO_Central"/>
</dbReference>
<dbReference type="GO" id="GO:0009264">
    <property type="term" value="P:deoxyribonucleotide catabolic process"/>
    <property type="evidence" value="ECO:0000318"/>
    <property type="project" value="GO_Central"/>
</dbReference>
<dbReference type="CDD" id="cd00959">
    <property type="entry name" value="DeoC"/>
    <property type="match status" value="1"/>
</dbReference>
<dbReference type="FunFam" id="3.20.20.70:FF:000044">
    <property type="entry name" value="Deoxyribose-phosphate aldolase"/>
    <property type="match status" value="1"/>
</dbReference>
<dbReference type="Gene3D" id="3.20.20.70">
    <property type="entry name" value="Aldolase class I"/>
    <property type="match status" value="1"/>
</dbReference>
<dbReference type="HAMAP" id="MF_00114">
    <property type="entry name" value="DeoC_type1"/>
    <property type="match status" value="1"/>
</dbReference>
<dbReference type="InterPro" id="IPR013785">
    <property type="entry name" value="Aldolase_TIM"/>
</dbReference>
<dbReference type="InterPro" id="IPR011343">
    <property type="entry name" value="DeoC"/>
</dbReference>
<dbReference type="InterPro" id="IPR002915">
    <property type="entry name" value="DeoC/FbaB/LacD_aldolase"/>
</dbReference>
<dbReference type="InterPro" id="IPR028581">
    <property type="entry name" value="DeoC_typeI"/>
</dbReference>
<dbReference type="NCBIfam" id="TIGR00126">
    <property type="entry name" value="deoC"/>
    <property type="match status" value="1"/>
</dbReference>
<dbReference type="PANTHER" id="PTHR10889">
    <property type="entry name" value="DEOXYRIBOSE-PHOSPHATE ALDOLASE"/>
    <property type="match status" value="1"/>
</dbReference>
<dbReference type="PANTHER" id="PTHR10889:SF1">
    <property type="entry name" value="DEOXYRIBOSE-PHOSPHATE ALDOLASE"/>
    <property type="match status" value="1"/>
</dbReference>
<dbReference type="Pfam" id="PF01791">
    <property type="entry name" value="DeoC"/>
    <property type="match status" value="1"/>
</dbReference>
<dbReference type="PIRSF" id="PIRSF001357">
    <property type="entry name" value="DeoC"/>
    <property type="match status" value="1"/>
</dbReference>
<dbReference type="SMART" id="SM01133">
    <property type="entry name" value="DeoC"/>
    <property type="match status" value="1"/>
</dbReference>
<dbReference type="SUPFAM" id="SSF51569">
    <property type="entry name" value="Aldolase"/>
    <property type="match status" value="1"/>
</dbReference>
<organism>
    <name type="scientific">Haemophilus influenzae (strain ATCC 51907 / DSM 11121 / KW20 / Rd)</name>
    <dbReference type="NCBI Taxonomy" id="71421"/>
    <lineage>
        <taxon>Bacteria</taxon>
        <taxon>Pseudomonadati</taxon>
        <taxon>Pseudomonadota</taxon>
        <taxon>Gammaproteobacteria</taxon>
        <taxon>Pasteurellales</taxon>
        <taxon>Pasteurellaceae</taxon>
        <taxon>Haemophilus</taxon>
    </lineage>
</organism>
<protein>
    <recommendedName>
        <fullName evidence="1">Deoxyribose-phosphate aldolase</fullName>
        <shortName evidence="1">DERA</shortName>
        <ecNumber evidence="1">4.1.2.4</ecNumber>
    </recommendedName>
    <alternativeName>
        <fullName evidence="1">2-deoxy-D-ribose 5-phosphate aldolase</fullName>
    </alternativeName>
    <alternativeName>
        <fullName evidence="1">Phosphodeoxyriboaldolase</fullName>
        <shortName evidence="1">Deoxyriboaldolase</shortName>
    </alternativeName>
</protein>
<keyword id="KW-0963">Cytoplasm</keyword>
<keyword id="KW-0456">Lyase</keyword>
<keyword id="KW-1185">Reference proteome</keyword>
<keyword id="KW-0704">Schiff base</keyword>
<evidence type="ECO:0000255" key="1">
    <source>
        <dbReference type="HAMAP-Rule" id="MF_00114"/>
    </source>
</evidence>
<evidence type="ECO:0000305" key="2"/>
<accession>P44430</accession>